<dbReference type="EC" id="2.1.1.199" evidence="1"/>
<dbReference type="EMBL" id="CP000879">
    <property type="protein sequence ID" value="ABX31588.1"/>
    <property type="molecule type" value="Genomic_DNA"/>
</dbReference>
<dbReference type="SMR" id="A9BHH9"/>
<dbReference type="STRING" id="403833.Pmob_0865"/>
<dbReference type="KEGG" id="pmo:Pmob_0865"/>
<dbReference type="eggNOG" id="COG0275">
    <property type="taxonomic scope" value="Bacteria"/>
</dbReference>
<dbReference type="HOGENOM" id="CLU_038422_3_0_0"/>
<dbReference type="Proteomes" id="UP000000789">
    <property type="component" value="Chromosome"/>
</dbReference>
<dbReference type="GO" id="GO:0005737">
    <property type="term" value="C:cytoplasm"/>
    <property type="evidence" value="ECO:0007669"/>
    <property type="project" value="UniProtKB-SubCell"/>
</dbReference>
<dbReference type="GO" id="GO:0071424">
    <property type="term" value="F:rRNA (cytosine-N4-)-methyltransferase activity"/>
    <property type="evidence" value="ECO:0007669"/>
    <property type="project" value="UniProtKB-UniRule"/>
</dbReference>
<dbReference type="GO" id="GO:0070475">
    <property type="term" value="P:rRNA base methylation"/>
    <property type="evidence" value="ECO:0007669"/>
    <property type="project" value="UniProtKB-UniRule"/>
</dbReference>
<dbReference type="Gene3D" id="1.10.150.170">
    <property type="entry name" value="Putative methyltransferase TM0872, insert domain"/>
    <property type="match status" value="1"/>
</dbReference>
<dbReference type="Gene3D" id="3.40.50.150">
    <property type="entry name" value="Vaccinia Virus protein VP39"/>
    <property type="match status" value="1"/>
</dbReference>
<dbReference type="HAMAP" id="MF_01007">
    <property type="entry name" value="16SrRNA_methyltr_H"/>
    <property type="match status" value="1"/>
</dbReference>
<dbReference type="InterPro" id="IPR002903">
    <property type="entry name" value="RsmH"/>
</dbReference>
<dbReference type="InterPro" id="IPR023397">
    <property type="entry name" value="SAM-dep_MeTrfase_MraW_recog"/>
</dbReference>
<dbReference type="InterPro" id="IPR029063">
    <property type="entry name" value="SAM-dependent_MTases_sf"/>
</dbReference>
<dbReference type="NCBIfam" id="TIGR00006">
    <property type="entry name" value="16S rRNA (cytosine(1402)-N(4))-methyltransferase RsmH"/>
    <property type="match status" value="1"/>
</dbReference>
<dbReference type="PANTHER" id="PTHR11265:SF0">
    <property type="entry name" value="12S RRNA N4-METHYLCYTIDINE METHYLTRANSFERASE"/>
    <property type="match status" value="1"/>
</dbReference>
<dbReference type="PANTHER" id="PTHR11265">
    <property type="entry name" value="S-ADENOSYL-METHYLTRANSFERASE MRAW"/>
    <property type="match status" value="1"/>
</dbReference>
<dbReference type="Pfam" id="PF01795">
    <property type="entry name" value="Methyltransf_5"/>
    <property type="match status" value="1"/>
</dbReference>
<dbReference type="PIRSF" id="PIRSF004486">
    <property type="entry name" value="MraW"/>
    <property type="match status" value="1"/>
</dbReference>
<dbReference type="SUPFAM" id="SSF81799">
    <property type="entry name" value="Putative methyltransferase TM0872, insert domain"/>
    <property type="match status" value="1"/>
</dbReference>
<dbReference type="SUPFAM" id="SSF53335">
    <property type="entry name" value="S-adenosyl-L-methionine-dependent methyltransferases"/>
    <property type="match status" value="1"/>
</dbReference>
<feature type="chain" id="PRO_0000387029" description="Ribosomal RNA small subunit methyltransferase H">
    <location>
        <begin position="1"/>
        <end position="286"/>
    </location>
</feature>
<feature type="binding site" evidence="1">
    <location>
        <begin position="25"/>
        <end position="27"/>
    </location>
    <ligand>
        <name>S-adenosyl-L-methionine</name>
        <dbReference type="ChEBI" id="CHEBI:59789"/>
    </ligand>
</feature>
<feature type="binding site" evidence="1">
    <location>
        <position position="45"/>
    </location>
    <ligand>
        <name>S-adenosyl-L-methionine</name>
        <dbReference type="ChEBI" id="CHEBI:59789"/>
    </ligand>
</feature>
<feature type="binding site" evidence="1">
    <location>
        <position position="79"/>
    </location>
    <ligand>
        <name>S-adenosyl-L-methionine</name>
        <dbReference type="ChEBI" id="CHEBI:59789"/>
    </ligand>
</feature>
<feature type="binding site" evidence="1">
    <location>
        <position position="93"/>
    </location>
    <ligand>
        <name>S-adenosyl-L-methionine</name>
        <dbReference type="ChEBI" id="CHEBI:59789"/>
    </ligand>
</feature>
<feature type="binding site" evidence="1">
    <location>
        <position position="100"/>
    </location>
    <ligand>
        <name>S-adenosyl-L-methionine</name>
        <dbReference type="ChEBI" id="CHEBI:59789"/>
    </ligand>
</feature>
<proteinExistence type="inferred from homology"/>
<accession>A9BHH9</accession>
<organism>
    <name type="scientific">Petrotoga mobilis (strain DSM 10674 / SJ95)</name>
    <dbReference type="NCBI Taxonomy" id="403833"/>
    <lineage>
        <taxon>Bacteria</taxon>
        <taxon>Thermotogati</taxon>
        <taxon>Thermotogota</taxon>
        <taxon>Thermotogae</taxon>
        <taxon>Petrotogales</taxon>
        <taxon>Petrotogaceae</taxon>
        <taxon>Petrotoga</taxon>
    </lineage>
</organism>
<sequence length="286" mass="32837">MVEEVLSYMITNKDGIYVDCTAGEGGHIKAILGYTNNKAKVIGVDVDYEVLEIAEERLKDLSDNVVLIKSSYKNIDMVLRGLGIDKVDGFLMDLGVSTFQLKGENRGFSFTKDEPLDMRMDVQSEKDAAYIVNNYSQEDLRRIIFEYGEEKRFAHSISKSIVKNRPINTTQELVDAIRKGLPASQVHERHRHFATKTFQALRIEVNEELKNIEETLSKFESFLKVKARVAVITFHSLEDRIVKNFFKNNERYNFLTPKPILPTQEEIKHNPRSRSAKLRVVEYLGA</sequence>
<protein>
    <recommendedName>
        <fullName evidence="1">Ribosomal RNA small subunit methyltransferase H</fullName>
        <ecNumber evidence="1">2.1.1.199</ecNumber>
    </recommendedName>
    <alternativeName>
        <fullName evidence="1">16S rRNA m(4)C1402 methyltransferase</fullName>
    </alternativeName>
    <alternativeName>
        <fullName evidence="1">rRNA (cytosine-N(4)-)-methyltransferase RsmH</fullName>
    </alternativeName>
</protein>
<name>RSMH_PETMO</name>
<comment type="function">
    <text evidence="1">Specifically methylates the N4 position of cytidine in position 1402 (C1402) of 16S rRNA.</text>
</comment>
<comment type="catalytic activity">
    <reaction evidence="1">
        <text>cytidine(1402) in 16S rRNA + S-adenosyl-L-methionine = N(4)-methylcytidine(1402) in 16S rRNA + S-adenosyl-L-homocysteine + H(+)</text>
        <dbReference type="Rhea" id="RHEA:42928"/>
        <dbReference type="Rhea" id="RHEA-COMP:10286"/>
        <dbReference type="Rhea" id="RHEA-COMP:10287"/>
        <dbReference type="ChEBI" id="CHEBI:15378"/>
        <dbReference type="ChEBI" id="CHEBI:57856"/>
        <dbReference type="ChEBI" id="CHEBI:59789"/>
        <dbReference type="ChEBI" id="CHEBI:74506"/>
        <dbReference type="ChEBI" id="CHEBI:82748"/>
        <dbReference type="EC" id="2.1.1.199"/>
    </reaction>
</comment>
<comment type="subcellular location">
    <subcellularLocation>
        <location evidence="1">Cytoplasm</location>
    </subcellularLocation>
</comment>
<comment type="similarity">
    <text evidence="1">Belongs to the methyltransferase superfamily. RsmH family.</text>
</comment>
<keyword id="KW-0963">Cytoplasm</keyword>
<keyword id="KW-0489">Methyltransferase</keyword>
<keyword id="KW-0698">rRNA processing</keyword>
<keyword id="KW-0949">S-adenosyl-L-methionine</keyword>
<keyword id="KW-0808">Transferase</keyword>
<gene>
    <name evidence="1" type="primary">rsmH</name>
    <name type="synonym">mraW</name>
    <name type="ordered locus">Pmob_0865</name>
</gene>
<evidence type="ECO:0000255" key="1">
    <source>
        <dbReference type="HAMAP-Rule" id="MF_01007"/>
    </source>
</evidence>
<reference key="1">
    <citation type="submission" date="2007-11" db="EMBL/GenBank/DDBJ databases">
        <title>Complete sequence of Petroga mobilis SJ95.</title>
        <authorList>
            <consortium name="US DOE Joint Genome Institute"/>
            <person name="Copeland A."/>
            <person name="Lucas S."/>
            <person name="Lapidus A."/>
            <person name="Barry K."/>
            <person name="Glavina del Rio T."/>
            <person name="Dalin E."/>
            <person name="Tice H."/>
            <person name="Pitluck S."/>
            <person name="Meincke L."/>
            <person name="Brettin T."/>
            <person name="Bruce D."/>
            <person name="Detter J.C."/>
            <person name="Han C."/>
            <person name="Kuske C.R."/>
            <person name="Schmutz J."/>
            <person name="Larimer F."/>
            <person name="Land M."/>
            <person name="Hauser L."/>
            <person name="Kyrpides N."/>
            <person name="Mikhailova N."/>
            <person name="Noll K."/>
            <person name="Richardson P."/>
        </authorList>
    </citation>
    <scope>NUCLEOTIDE SEQUENCE [LARGE SCALE GENOMIC DNA]</scope>
    <source>
        <strain>DSM 10674 / SJ95</strain>
    </source>
</reference>